<name>FPG_WOLWR</name>
<reference key="1">
    <citation type="journal article" date="2009" name="Proc. Natl. Acad. Sci. U.S.A.">
        <title>The mosaic genome structure of the Wolbachia wRi strain infecting Drosophila simulans.</title>
        <authorList>
            <person name="Klasson L."/>
            <person name="Westberg J."/>
            <person name="Sapountzis P."/>
            <person name="Naeslund K."/>
            <person name="Lutnaes Y."/>
            <person name="Darby A.C."/>
            <person name="Veneti Z."/>
            <person name="Chen L."/>
            <person name="Braig H.R."/>
            <person name="Garrett R."/>
            <person name="Bourtzis K."/>
            <person name="Andersson S.G."/>
        </authorList>
    </citation>
    <scope>NUCLEOTIDE SEQUENCE [LARGE SCALE GENOMIC DNA]</scope>
    <source>
        <strain>wRi</strain>
    </source>
</reference>
<dbReference type="EC" id="3.2.2.23" evidence="2"/>
<dbReference type="EC" id="4.2.99.18" evidence="2"/>
<dbReference type="EMBL" id="CP001391">
    <property type="protein sequence ID" value="ACN95828.1"/>
    <property type="molecule type" value="Genomic_DNA"/>
</dbReference>
<dbReference type="RefSeq" id="WP_006280314.1">
    <property type="nucleotide sequence ID" value="NZ_MKIF01000089.1"/>
</dbReference>
<dbReference type="SMR" id="C0R4I6"/>
<dbReference type="STRING" id="66084.WRi_011330"/>
<dbReference type="KEGG" id="wri:WRi_011330"/>
<dbReference type="HOGENOM" id="CLU_038423_1_1_5"/>
<dbReference type="Proteomes" id="UP000001293">
    <property type="component" value="Chromosome"/>
</dbReference>
<dbReference type="GO" id="GO:0034039">
    <property type="term" value="F:8-oxo-7,8-dihydroguanine DNA N-glycosylase activity"/>
    <property type="evidence" value="ECO:0007669"/>
    <property type="project" value="TreeGrafter"/>
</dbReference>
<dbReference type="GO" id="GO:0140078">
    <property type="term" value="F:class I DNA-(apurinic or apyrimidinic site) endonuclease activity"/>
    <property type="evidence" value="ECO:0007669"/>
    <property type="project" value="UniProtKB-EC"/>
</dbReference>
<dbReference type="GO" id="GO:0003684">
    <property type="term" value="F:damaged DNA binding"/>
    <property type="evidence" value="ECO:0007669"/>
    <property type="project" value="InterPro"/>
</dbReference>
<dbReference type="GO" id="GO:0008270">
    <property type="term" value="F:zinc ion binding"/>
    <property type="evidence" value="ECO:0007669"/>
    <property type="project" value="UniProtKB-UniRule"/>
</dbReference>
<dbReference type="GO" id="GO:0006284">
    <property type="term" value="P:base-excision repair"/>
    <property type="evidence" value="ECO:0007669"/>
    <property type="project" value="InterPro"/>
</dbReference>
<dbReference type="CDD" id="cd08966">
    <property type="entry name" value="EcFpg-like_N"/>
    <property type="match status" value="1"/>
</dbReference>
<dbReference type="FunFam" id="1.10.8.50:FF:000003">
    <property type="entry name" value="Formamidopyrimidine-DNA glycosylase"/>
    <property type="match status" value="1"/>
</dbReference>
<dbReference type="Gene3D" id="1.10.8.50">
    <property type="match status" value="1"/>
</dbReference>
<dbReference type="Gene3D" id="3.20.190.10">
    <property type="entry name" value="MutM-like, N-terminal"/>
    <property type="match status" value="1"/>
</dbReference>
<dbReference type="HAMAP" id="MF_00103">
    <property type="entry name" value="Fapy_DNA_glycosyl"/>
    <property type="match status" value="1"/>
</dbReference>
<dbReference type="InterPro" id="IPR015886">
    <property type="entry name" value="DNA_glyclase/AP_lyase_DNA-bd"/>
</dbReference>
<dbReference type="InterPro" id="IPR015887">
    <property type="entry name" value="DNA_glyclase_Znf_dom_DNA_BS"/>
</dbReference>
<dbReference type="InterPro" id="IPR020629">
    <property type="entry name" value="Formamido-pyr_DNA_Glyclase"/>
</dbReference>
<dbReference type="InterPro" id="IPR012319">
    <property type="entry name" value="FPG_cat"/>
</dbReference>
<dbReference type="InterPro" id="IPR035937">
    <property type="entry name" value="MutM-like_N-ter"/>
</dbReference>
<dbReference type="InterPro" id="IPR010979">
    <property type="entry name" value="Ribosomal_uS13-like_H2TH"/>
</dbReference>
<dbReference type="InterPro" id="IPR000214">
    <property type="entry name" value="Znf_DNA_glyclase/AP_lyase"/>
</dbReference>
<dbReference type="InterPro" id="IPR010663">
    <property type="entry name" value="Znf_FPG/IleRS"/>
</dbReference>
<dbReference type="NCBIfam" id="TIGR00577">
    <property type="entry name" value="fpg"/>
    <property type="match status" value="1"/>
</dbReference>
<dbReference type="NCBIfam" id="NF002211">
    <property type="entry name" value="PRK01103.1"/>
    <property type="match status" value="1"/>
</dbReference>
<dbReference type="PANTHER" id="PTHR22993">
    <property type="entry name" value="FORMAMIDOPYRIMIDINE-DNA GLYCOSYLASE"/>
    <property type="match status" value="1"/>
</dbReference>
<dbReference type="PANTHER" id="PTHR22993:SF9">
    <property type="entry name" value="FORMAMIDOPYRIMIDINE-DNA GLYCOSYLASE"/>
    <property type="match status" value="1"/>
</dbReference>
<dbReference type="Pfam" id="PF01149">
    <property type="entry name" value="Fapy_DNA_glyco"/>
    <property type="match status" value="1"/>
</dbReference>
<dbReference type="Pfam" id="PF06831">
    <property type="entry name" value="H2TH"/>
    <property type="match status" value="1"/>
</dbReference>
<dbReference type="Pfam" id="PF06827">
    <property type="entry name" value="zf-FPG_IleRS"/>
    <property type="match status" value="1"/>
</dbReference>
<dbReference type="SMART" id="SM00898">
    <property type="entry name" value="Fapy_DNA_glyco"/>
    <property type="match status" value="1"/>
</dbReference>
<dbReference type="SMART" id="SM01232">
    <property type="entry name" value="H2TH"/>
    <property type="match status" value="1"/>
</dbReference>
<dbReference type="SUPFAM" id="SSF57716">
    <property type="entry name" value="Glucocorticoid receptor-like (DNA-binding domain)"/>
    <property type="match status" value="1"/>
</dbReference>
<dbReference type="SUPFAM" id="SSF81624">
    <property type="entry name" value="N-terminal domain of MutM-like DNA repair proteins"/>
    <property type="match status" value="1"/>
</dbReference>
<dbReference type="SUPFAM" id="SSF46946">
    <property type="entry name" value="S13-like H2TH domain"/>
    <property type="match status" value="1"/>
</dbReference>
<dbReference type="PROSITE" id="PS51068">
    <property type="entry name" value="FPG_CAT"/>
    <property type="match status" value="1"/>
</dbReference>
<dbReference type="PROSITE" id="PS01242">
    <property type="entry name" value="ZF_FPG_1"/>
    <property type="match status" value="1"/>
</dbReference>
<dbReference type="PROSITE" id="PS51066">
    <property type="entry name" value="ZF_FPG_2"/>
    <property type="match status" value="1"/>
</dbReference>
<gene>
    <name evidence="2" type="primary">mutM</name>
    <name evidence="2" type="synonym">fpg</name>
    <name type="ordered locus">WRi_011330</name>
</gene>
<proteinExistence type="inferred from homology"/>
<sequence>MPELPEVEVISNFLLDKIKNKQISNVIVNNWNLRAPITKNIDDMLKGKVIRNIKRRGKYTIWNTDGSMAVIIHLGMSGKLIYAEHDQAQNKHDHVVFLFSDNTSIIFNDPRRFGLVIVLNKEQEINFFDDFGIEPLTDEFSGDYLQELLKNKKANIKSALMDNKLIVGVGNIYASESLFRARISPLRPAKNLTYREYEKLAAEIKNTLSDAIAAGGSTLKDYAQPSGSAGYFQNNFYVYGKVQKPCKICNNIITLIRQNGRSTYFCNACQN</sequence>
<feature type="initiator methionine" description="Removed" evidence="1">
    <location>
        <position position="1"/>
    </location>
</feature>
<feature type="chain" id="PRO_1000118907" description="Formamidopyrimidine-DNA glycosylase">
    <location>
        <begin position="2"/>
        <end position="271"/>
    </location>
</feature>
<feature type="zinc finger region" description="FPG-type" evidence="2">
    <location>
        <begin position="237"/>
        <end position="271"/>
    </location>
</feature>
<feature type="active site" description="Schiff-base intermediate with DNA" evidence="2">
    <location>
        <position position="2"/>
    </location>
</feature>
<feature type="active site" description="Proton donor" evidence="2">
    <location>
        <position position="3"/>
    </location>
</feature>
<feature type="active site" description="Proton donor; for beta-elimination activity" evidence="2">
    <location>
        <position position="58"/>
    </location>
</feature>
<feature type="active site" description="Proton donor; for delta-elimination activity" evidence="2">
    <location>
        <position position="261"/>
    </location>
</feature>
<feature type="binding site" evidence="2">
    <location>
        <position position="92"/>
    </location>
    <ligand>
        <name>DNA</name>
        <dbReference type="ChEBI" id="CHEBI:16991"/>
    </ligand>
</feature>
<feature type="binding site" evidence="2">
    <location>
        <position position="111"/>
    </location>
    <ligand>
        <name>DNA</name>
        <dbReference type="ChEBI" id="CHEBI:16991"/>
    </ligand>
</feature>
<feature type="binding site" evidence="2">
    <location>
        <position position="152"/>
    </location>
    <ligand>
        <name>DNA</name>
        <dbReference type="ChEBI" id="CHEBI:16991"/>
    </ligand>
</feature>
<protein>
    <recommendedName>
        <fullName evidence="2">Formamidopyrimidine-DNA glycosylase</fullName>
        <shortName evidence="2">Fapy-DNA glycosylase</shortName>
        <ecNumber evidence="2">3.2.2.23</ecNumber>
    </recommendedName>
    <alternativeName>
        <fullName evidence="2">DNA-(apurinic or apyrimidinic site) lyase MutM</fullName>
        <shortName evidence="2">AP lyase MutM</shortName>
        <ecNumber evidence="2">4.2.99.18</ecNumber>
    </alternativeName>
</protein>
<organism>
    <name type="scientific">Wolbachia sp. subsp. Drosophila simulans (strain wRi)</name>
    <dbReference type="NCBI Taxonomy" id="66084"/>
    <lineage>
        <taxon>Bacteria</taxon>
        <taxon>Pseudomonadati</taxon>
        <taxon>Pseudomonadota</taxon>
        <taxon>Alphaproteobacteria</taxon>
        <taxon>Rickettsiales</taxon>
        <taxon>Anaplasmataceae</taxon>
        <taxon>Wolbachieae</taxon>
        <taxon>Wolbachia</taxon>
    </lineage>
</organism>
<keyword id="KW-0227">DNA damage</keyword>
<keyword id="KW-0234">DNA repair</keyword>
<keyword id="KW-0238">DNA-binding</keyword>
<keyword id="KW-0326">Glycosidase</keyword>
<keyword id="KW-0378">Hydrolase</keyword>
<keyword id="KW-0456">Lyase</keyword>
<keyword id="KW-0479">Metal-binding</keyword>
<keyword id="KW-0511">Multifunctional enzyme</keyword>
<keyword id="KW-0862">Zinc</keyword>
<keyword id="KW-0863">Zinc-finger</keyword>
<comment type="function">
    <text evidence="2">Involved in base excision repair of DNA damaged by oxidation or by mutagenic agents. Acts as a DNA glycosylase that recognizes and removes damaged bases. Has a preference for oxidized purines, such as 7,8-dihydro-8-oxoguanine (8-oxoG). Has AP (apurinic/apyrimidinic) lyase activity and introduces nicks in the DNA strand. Cleaves the DNA backbone by beta-delta elimination to generate a single-strand break at the site of the removed base with both 3'- and 5'-phosphates.</text>
</comment>
<comment type="catalytic activity">
    <reaction evidence="2">
        <text>Hydrolysis of DNA containing ring-opened 7-methylguanine residues, releasing 2,6-diamino-4-hydroxy-5-(N-methyl)formamidopyrimidine.</text>
        <dbReference type="EC" id="3.2.2.23"/>
    </reaction>
</comment>
<comment type="catalytic activity">
    <reaction evidence="2">
        <text>2'-deoxyribonucleotide-(2'-deoxyribose 5'-phosphate)-2'-deoxyribonucleotide-DNA = a 3'-end 2'-deoxyribonucleotide-(2,3-dehydro-2,3-deoxyribose 5'-phosphate)-DNA + a 5'-end 5'-phospho-2'-deoxyribonucleoside-DNA + H(+)</text>
        <dbReference type="Rhea" id="RHEA:66592"/>
        <dbReference type="Rhea" id="RHEA-COMP:13180"/>
        <dbReference type="Rhea" id="RHEA-COMP:16897"/>
        <dbReference type="Rhea" id="RHEA-COMP:17067"/>
        <dbReference type="ChEBI" id="CHEBI:15378"/>
        <dbReference type="ChEBI" id="CHEBI:136412"/>
        <dbReference type="ChEBI" id="CHEBI:157695"/>
        <dbReference type="ChEBI" id="CHEBI:167181"/>
        <dbReference type="EC" id="4.2.99.18"/>
    </reaction>
</comment>
<comment type="cofactor">
    <cofactor evidence="2">
        <name>Zn(2+)</name>
        <dbReference type="ChEBI" id="CHEBI:29105"/>
    </cofactor>
    <text evidence="2">Binds 1 zinc ion per subunit.</text>
</comment>
<comment type="subunit">
    <text evidence="2">Monomer.</text>
</comment>
<comment type="similarity">
    <text evidence="2">Belongs to the FPG family.</text>
</comment>
<accession>C0R4I6</accession>
<evidence type="ECO:0000250" key="1"/>
<evidence type="ECO:0000255" key="2">
    <source>
        <dbReference type="HAMAP-Rule" id="MF_00103"/>
    </source>
</evidence>